<name>3S151_MICAT</name>
<protein>
    <recommendedName>
        <fullName>Three-finger toxin MALT0051C</fullName>
    </recommendedName>
    <alternativeName>
        <fullName>MALT0051C</fullName>
    </alternativeName>
</protein>
<accession>F5CPD5</accession>
<sequence>MKTLLLTLVVVTVVCLDFGHTMICYNQQSSQPPTTTTCSEGQCYKKTWSDHRGTIIERGCACPNVKPGVKISCCSSDKCNG</sequence>
<feature type="signal peptide" evidence="3">
    <location>
        <begin position="1"/>
        <end position="21"/>
    </location>
</feature>
<feature type="chain" id="PRO_0000422896" description="Three-finger toxin MALT0051C" evidence="5">
    <location>
        <begin position="22"/>
        <end position="81"/>
    </location>
</feature>
<feature type="disulfide bond" evidence="1">
    <location>
        <begin position="24"/>
        <end position="43"/>
    </location>
</feature>
<feature type="disulfide bond" evidence="1">
    <location>
        <begin position="38"/>
        <end position="60"/>
    </location>
</feature>
<feature type="disulfide bond" evidence="1">
    <location>
        <begin position="62"/>
        <end position="73"/>
    </location>
</feature>
<feature type="disulfide bond" evidence="1">
    <location>
        <begin position="74"/>
        <end position="79"/>
    </location>
</feature>
<organism>
    <name type="scientific">Micrurus altirostris</name>
    <name type="common">Uruguayan coral snake</name>
    <name type="synonym">Elaps altirostris</name>
    <dbReference type="NCBI Taxonomy" id="129457"/>
    <lineage>
        <taxon>Eukaryota</taxon>
        <taxon>Metazoa</taxon>
        <taxon>Chordata</taxon>
        <taxon>Craniata</taxon>
        <taxon>Vertebrata</taxon>
        <taxon>Euteleostomi</taxon>
        <taxon>Lepidosauria</taxon>
        <taxon>Squamata</taxon>
        <taxon>Bifurcata</taxon>
        <taxon>Unidentata</taxon>
        <taxon>Episquamata</taxon>
        <taxon>Toxicofera</taxon>
        <taxon>Serpentes</taxon>
        <taxon>Colubroidea</taxon>
        <taxon>Elapidae</taxon>
        <taxon>Elapinae</taxon>
        <taxon>Micrurus</taxon>
    </lineage>
</organism>
<evidence type="ECO:0000250" key="1">
    <source>
        <dbReference type="UniProtKB" id="P0C1Z0"/>
    </source>
</evidence>
<evidence type="ECO:0000250" key="2">
    <source>
        <dbReference type="UniProtKB" id="P60775"/>
    </source>
</evidence>
<evidence type="ECO:0000269" key="3">
    <source>
    </source>
</evidence>
<evidence type="ECO:0000305" key="4"/>
<evidence type="ECO:0000305" key="5">
    <source>
    </source>
</evidence>
<proteinExistence type="evidence at protein level"/>
<comment type="function">
    <text evidence="2">Binds to muscle nicotinic acetylcholine receptor (nAChR) and inhibit acetylcholine from binding to the receptor, thereby impairing neuromuscular transmission.</text>
</comment>
<comment type="subcellular location">
    <subcellularLocation>
        <location evidence="3">Secreted</location>
    </subcellularLocation>
</comment>
<comment type="tissue specificity">
    <text evidence="4">Expressed by the venom gland.</text>
</comment>
<comment type="mass spectrometry">
    <text>Average mass.</text>
</comment>
<comment type="similarity">
    <text evidence="4">Belongs to the three-finger toxin family. Short-chain subfamily. Type I alpha-neurotoxin sub-subfamily.</text>
</comment>
<dbReference type="EMBL" id="JF754473">
    <property type="protein sequence ID" value="AED89562.1"/>
    <property type="molecule type" value="mRNA"/>
</dbReference>
<dbReference type="SMR" id="F5CPD5"/>
<dbReference type="GO" id="GO:0005576">
    <property type="term" value="C:extracellular region"/>
    <property type="evidence" value="ECO:0007669"/>
    <property type="project" value="UniProtKB-SubCell"/>
</dbReference>
<dbReference type="GO" id="GO:0030550">
    <property type="term" value="F:acetylcholine receptor inhibitor activity"/>
    <property type="evidence" value="ECO:0007669"/>
    <property type="project" value="UniProtKB-KW"/>
</dbReference>
<dbReference type="GO" id="GO:0090729">
    <property type="term" value="F:toxin activity"/>
    <property type="evidence" value="ECO:0007669"/>
    <property type="project" value="UniProtKB-KW"/>
</dbReference>
<dbReference type="CDD" id="cd00206">
    <property type="entry name" value="TFP_snake_toxin"/>
    <property type="match status" value="1"/>
</dbReference>
<dbReference type="FunFam" id="2.10.60.10:FF:000024">
    <property type="entry name" value="Cytotoxin 1"/>
    <property type="match status" value="1"/>
</dbReference>
<dbReference type="Gene3D" id="2.10.60.10">
    <property type="entry name" value="CD59"/>
    <property type="match status" value="1"/>
</dbReference>
<dbReference type="InterPro" id="IPR003571">
    <property type="entry name" value="Snake_3FTx"/>
</dbReference>
<dbReference type="InterPro" id="IPR045860">
    <property type="entry name" value="Snake_toxin-like_sf"/>
</dbReference>
<dbReference type="InterPro" id="IPR018354">
    <property type="entry name" value="Snake_toxin_con_site"/>
</dbReference>
<dbReference type="InterPro" id="IPR054131">
    <property type="entry name" value="Toxin_cobra-type"/>
</dbReference>
<dbReference type="Pfam" id="PF21947">
    <property type="entry name" value="Toxin_cobra-type"/>
    <property type="match status" value="1"/>
</dbReference>
<dbReference type="SUPFAM" id="SSF57302">
    <property type="entry name" value="Snake toxin-like"/>
    <property type="match status" value="1"/>
</dbReference>
<dbReference type="PROSITE" id="PS00272">
    <property type="entry name" value="SNAKE_TOXIN"/>
    <property type="match status" value="1"/>
</dbReference>
<reference key="1">
    <citation type="journal article" date="2011" name="J. Proteomics">
        <title>Snake venomics and venom gland transcriptomic analysis of Brazilian coral snakes, Micrurus altirostris and M. corallinus.</title>
        <authorList>
            <person name="Correa-Netto C."/>
            <person name="Junqueira-de-Azevedo Ide L."/>
            <person name="Silva D.A."/>
            <person name="Ho P.L."/>
            <person name="Leitao-de-Araujo M."/>
            <person name="Alves M.L."/>
            <person name="Sanz L."/>
            <person name="Foguel D."/>
            <person name="Zingali R.B."/>
            <person name="Calvete J.J."/>
        </authorList>
    </citation>
    <scope>NUCLEOTIDE SEQUENCE [MRNA]</scope>
    <scope>PROTEIN SEQUENCE OF 22-36</scope>
    <scope>MASS SPECTROMETRY</scope>
    <scope>SUBCELLULAR LOCATION</scope>
    <source>
        <tissue>Venom</tissue>
        <tissue>Venom gland</tissue>
    </source>
</reference>
<keyword id="KW-0008">Acetylcholine receptor inhibiting toxin</keyword>
<keyword id="KW-0903">Direct protein sequencing</keyword>
<keyword id="KW-1015">Disulfide bond</keyword>
<keyword id="KW-0528">Neurotoxin</keyword>
<keyword id="KW-0629">Postsynaptic neurotoxin</keyword>
<keyword id="KW-0964">Secreted</keyword>
<keyword id="KW-0732">Signal</keyword>
<keyword id="KW-0800">Toxin</keyword>